<comment type="function">
    <text>Guanine nucleotide-binding proteins (G proteins) are involved as a modulator or transducer in various transmembrane signaling systems. The beta and gamma chains are required for the GTPase activity, for replacement of GDP by GTP, and for G protein-effector interaction.</text>
</comment>
<comment type="subunit">
    <text>G proteins are composed of 3 units, alpha, beta and gamma.</text>
</comment>
<comment type="subcellular location">
    <subcellularLocation>
        <location evidence="3">Cell membrane</location>
        <topology evidence="3">Lipid-anchor</topology>
        <orientation evidence="3">Cytoplasmic side</orientation>
    </subcellularLocation>
</comment>
<comment type="similarity">
    <text evidence="3">Belongs to the G protein gamma family.</text>
</comment>
<keyword id="KW-0007">Acetylation</keyword>
<keyword id="KW-1003">Cell membrane</keyword>
<keyword id="KW-0449">Lipoprotein</keyword>
<keyword id="KW-0472">Membrane</keyword>
<keyword id="KW-0488">Methylation</keyword>
<keyword id="KW-0597">Phosphoprotein</keyword>
<keyword id="KW-0636">Prenylation</keyword>
<keyword id="KW-1185">Reference proteome</keyword>
<keyword id="KW-0807">Transducer</keyword>
<protein>
    <recommendedName>
        <fullName>Guanine nucleotide-binding protein G(I)/G(S)/G(O) subunit gamma-5</fullName>
    </recommendedName>
</protein>
<sequence>MSGSSSVAAMKKVVQQLRLEAGLNRVKVSQAAADLKQFCLQNAQHDPLLTGVSSSTNPFRPQKVCSFL</sequence>
<organism>
    <name type="scientific">Mus musculus</name>
    <name type="common">Mouse</name>
    <dbReference type="NCBI Taxonomy" id="10090"/>
    <lineage>
        <taxon>Eukaryota</taxon>
        <taxon>Metazoa</taxon>
        <taxon>Chordata</taxon>
        <taxon>Craniata</taxon>
        <taxon>Vertebrata</taxon>
        <taxon>Euteleostomi</taxon>
        <taxon>Mammalia</taxon>
        <taxon>Eutheria</taxon>
        <taxon>Euarchontoglires</taxon>
        <taxon>Glires</taxon>
        <taxon>Rodentia</taxon>
        <taxon>Myomorpha</taxon>
        <taxon>Muroidea</taxon>
        <taxon>Muridae</taxon>
        <taxon>Murinae</taxon>
        <taxon>Mus</taxon>
        <taxon>Mus</taxon>
    </lineage>
</organism>
<accession>Q80SZ7</accession>
<accession>P30670</accession>
<accession>Q5I0W4</accession>
<accession>Q61015</accession>
<proteinExistence type="evidence at protein level"/>
<name>GBG5_MOUSE</name>
<dbReference type="EMBL" id="BC002316">
    <property type="protein sequence ID" value="AAH02316.3"/>
    <property type="molecule type" value="mRNA"/>
</dbReference>
<dbReference type="EMBL" id="BC087872">
    <property type="protein sequence ID" value="AAH87872.1"/>
    <property type="molecule type" value="mRNA"/>
</dbReference>
<dbReference type="EMBL" id="U38498">
    <property type="protein sequence ID" value="AAB01729.1"/>
    <property type="molecule type" value="mRNA"/>
</dbReference>
<dbReference type="CCDS" id="CCDS17903.1"/>
<dbReference type="RefSeq" id="NP_034448.2">
    <property type="nucleotide sequence ID" value="NM_010318.2"/>
</dbReference>
<dbReference type="RefSeq" id="XP_003945606.1">
    <property type="nucleotide sequence ID" value="XM_003945557.2"/>
</dbReference>
<dbReference type="SMR" id="Q80SZ7"/>
<dbReference type="BioGRID" id="199991">
    <property type="interactions" value="4"/>
</dbReference>
<dbReference type="FunCoup" id="Q80SZ7">
    <property type="interactions" value="1521"/>
</dbReference>
<dbReference type="IntAct" id="Q80SZ7">
    <property type="interactions" value="1"/>
</dbReference>
<dbReference type="STRING" id="10090.ENSMUSP00000114014"/>
<dbReference type="iPTMnet" id="Q80SZ7"/>
<dbReference type="PhosphoSitePlus" id="Q80SZ7"/>
<dbReference type="jPOST" id="Q80SZ7"/>
<dbReference type="PaxDb" id="10090-ENSMUSP00000087485"/>
<dbReference type="ProteomicsDB" id="266777"/>
<dbReference type="Pumba" id="Q80SZ7"/>
<dbReference type="DNASU" id="14707"/>
<dbReference type="Ensembl" id="ENSMUST00000090031.12">
    <property type="protein sequence ID" value="ENSMUSP00000087485.6"/>
    <property type="gene ID" value="ENSMUSG00000068523.13"/>
</dbReference>
<dbReference type="Ensembl" id="ENSMUST00000118280.2">
    <property type="protein sequence ID" value="ENSMUSP00000114014.2"/>
    <property type="gene ID" value="ENSMUSG00000068523.13"/>
</dbReference>
<dbReference type="GeneID" id="14707"/>
<dbReference type="KEGG" id="mmu:14707"/>
<dbReference type="UCSC" id="uc008rrk.1">
    <property type="organism name" value="mouse"/>
</dbReference>
<dbReference type="AGR" id="MGI:109164"/>
<dbReference type="CTD" id="2787"/>
<dbReference type="MGI" id="MGI:109164">
    <property type="gene designation" value="Gng5"/>
</dbReference>
<dbReference type="VEuPathDB" id="HostDB:ENSMUSG00000068523"/>
<dbReference type="eggNOG" id="KOG4119">
    <property type="taxonomic scope" value="Eukaryota"/>
</dbReference>
<dbReference type="GeneTree" id="ENSGT01100000263525"/>
<dbReference type="HOGENOM" id="CLU_168377_3_0_1"/>
<dbReference type="InParanoid" id="Q80SZ7"/>
<dbReference type="OMA" id="QNALHDP"/>
<dbReference type="OrthoDB" id="6264244at2759"/>
<dbReference type="PhylomeDB" id="Q80SZ7"/>
<dbReference type="TreeFam" id="TF319909"/>
<dbReference type="Reactome" id="R-MMU-1296041">
    <property type="pathway name" value="Activation of G protein gated Potassium channels"/>
</dbReference>
<dbReference type="Reactome" id="R-MMU-202040">
    <property type="pathway name" value="G-protein activation"/>
</dbReference>
<dbReference type="Reactome" id="R-MMU-381676">
    <property type="pathway name" value="Glucagon-like Peptide-1 (GLP1) regulates insulin secretion"/>
</dbReference>
<dbReference type="Reactome" id="R-MMU-392170">
    <property type="pathway name" value="ADP signalling through P2Y purinoceptor 12"/>
</dbReference>
<dbReference type="Reactome" id="R-MMU-392451">
    <property type="pathway name" value="G beta:gamma signalling through PI3Kgamma"/>
</dbReference>
<dbReference type="Reactome" id="R-MMU-392851">
    <property type="pathway name" value="Prostacyclin signalling through prostacyclin receptor"/>
</dbReference>
<dbReference type="Reactome" id="R-MMU-400042">
    <property type="pathway name" value="Adrenaline,noradrenaline inhibits insulin secretion"/>
</dbReference>
<dbReference type="Reactome" id="R-MMU-4086398">
    <property type="pathway name" value="Ca2+ pathway"/>
</dbReference>
<dbReference type="Reactome" id="R-MMU-416476">
    <property type="pathway name" value="G alpha (q) signalling events"/>
</dbReference>
<dbReference type="Reactome" id="R-MMU-416482">
    <property type="pathway name" value="G alpha (12/13) signalling events"/>
</dbReference>
<dbReference type="Reactome" id="R-MMU-418217">
    <property type="pathway name" value="G beta:gamma signalling through PLC beta"/>
</dbReference>
<dbReference type="Reactome" id="R-MMU-418555">
    <property type="pathway name" value="G alpha (s) signalling events"/>
</dbReference>
<dbReference type="Reactome" id="R-MMU-418592">
    <property type="pathway name" value="ADP signalling through P2Y purinoceptor 1"/>
</dbReference>
<dbReference type="Reactome" id="R-MMU-418594">
    <property type="pathway name" value="G alpha (i) signalling events"/>
</dbReference>
<dbReference type="Reactome" id="R-MMU-418597">
    <property type="pathway name" value="G alpha (z) signalling events"/>
</dbReference>
<dbReference type="Reactome" id="R-MMU-420092">
    <property type="pathway name" value="Glucagon-type ligand receptors"/>
</dbReference>
<dbReference type="Reactome" id="R-MMU-428930">
    <property type="pathway name" value="Thromboxane signalling through TP receptor"/>
</dbReference>
<dbReference type="Reactome" id="R-MMU-432040">
    <property type="pathway name" value="Vasopressin regulates renal water homeostasis via Aquaporins"/>
</dbReference>
<dbReference type="Reactome" id="R-MMU-456926">
    <property type="pathway name" value="Thrombin signalling through proteinase activated receptors (PARs)"/>
</dbReference>
<dbReference type="Reactome" id="R-MMU-500657">
    <property type="pathway name" value="Presynaptic function of Kainate receptors"/>
</dbReference>
<dbReference type="Reactome" id="R-MMU-6814122">
    <property type="pathway name" value="Cooperation of PDCL (PhLP1) and TRiC/CCT in G-protein beta folding"/>
</dbReference>
<dbReference type="Reactome" id="R-MMU-8964315">
    <property type="pathway name" value="G beta:gamma signalling through BTK"/>
</dbReference>
<dbReference type="Reactome" id="R-MMU-8964616">
    <property type="pathway name" value="G beta:gamma signalling through CDC42"/>
</dbReference>
<dbReference type="Reactome" id="R-MMU-9009391">
    <property type="pathway name" value="Extra-nuclear estrogen signaling"/>
</dbReference>
<dbReference type="Reactome" id="R-MMU-9634597">
    <property type="pathway name" value="GPER1 signaling"/>
</dbReference>
<dbReference type="Reactome" id="R-MMU-9856530">
    <property type="pathway name" value="High laminar flow shear stress activates signaling by PIEZO1 and PECAM1:CDH5:KDR in endothelial cells"/>
</dbReference>
<dbReference type="Reactome" id="R-MMU-997272">
    <property type="pathway name" value="Inhibition of voltage gated Ca2+ channels via Gbeta/gamma subunits"/>
</dbReference>
<dbReference type="BioGRID-ORCS" id="14707">
    <property type="hits" value="10 hits in 72 CRISPR screens"/>
</dbReference>
<dbReference type="ChiTaRS" id="Gng5">
    <property type="organism name" value="mouse"/>
</dbReference>
<dbReference type="PRO" id="PR:Q80SZ7"/>
<dbReference type="Proteomes" id="UP000000589">
    <property type="component" value="Chromosome 3"/>
</dbReference>
<dbReference type="RNAct" id="Q80SZ7">
    <property type="molecule type" value="protein"/>
</dbReference>
<dbReference type="Bgee" id="ENSMUSG00000068523">
    <property type="expression patterns" value="Expressed in right kidney and 120 other cell types or tissues"/>
</dbReference>
<dbReference type="ExpressionAtlas" id="Q80SZ7">
    <property type="expression patterns" value="baseline and differential"/>
</dbReference>
<dbReference type="GO" id="GO:0031680">
    <property type="term" value="C:G-protein beta/gamma-subunit complex"/>
    <property type="evidence" value="ECO:0000266"/>
    <property type="project" value="MGI"/>
</dbReference>
<dbReference type="GO" id="GO:0005834">
    <property type="term" value="C:heterotrimeric G-protein complex"/>
    <property type="evidence" value="ECO:0007669"/>
    <property type="project" value="InterPro"/>
</dbReference>
<dbReference type="GO" id="GO:0005739">
    <property type="term" value="C:mitochondrion"/>
    <property type="evidence" value="ECO:0007005"/>
    <property type="project" value="MGI"/>
</dbReference>
<dbReference type="GO" id="GO:0031681">
    <property type="term" value="F:G-protein beta-subunit binding"/>
    <property type="evidence" value="ECO:0007669"/>
    <property type="project" value="InterPro"/>
</dbReference>
<dbReference type="GO" id="GO:0030165">
    <property type="term" value="F:PDZ domain binding"/>
    <property type="evidence" value="ECO:0000266"/>
    <property type="project" value="MGI"/>
</dbReference>
<dbReference type="GO" id="GO:0007186">
    <property type="term" value="P:G protein-coupled receptor signaling pathway"/>
    <property type="evidence" value="ECO:0007669"/>
    <property type="project" value="InterPro"/>
</dbReference>
<dbReference type="GO" id="GO:2000179">
    <property type="term" value="P:positive regulation of neural precursor cell proliferation"/>
    <property type="evidence" value="ECO:0000315"/>
    <property type="project" value="MGI"/>
</dbReference>
<dbReference type="GO" id="GO:0072513">
    <property type="term" value="P:positive regulation of secondary heart field cardioblast proliferation"/>
    <property type="evidence" value="ECO:0000315"/>
    <property type="project" value="MGI"/>
</dbReference>
<dbReference type="CDD" id="cd00068">
    <property type="entry name" value="GGL"/>
    <property type="match status" value="1"/>
</dbReference>
<dbReference type="FunFam" id="4.10.260.10:FF:000001">
    <property type="entry name" value="Guanine nucleotide-binding protein subunit gamma"/>
    <property type="match status" value="1"/>
</dbReference>
<dbReference type="Gene3D" id="4.10.260.10">
    <property type="entry name" value="Transducin (heterotrimeric G protein), gamma chain"/>
    <property type="match status" value="1"/>
</dbReference>
<dbReference type="InterPro" id="IPR015898">
    <property type="entry name" value="G-protein_gamma-like_dom"/>
</dbReference>
<dbReference type="InterPro" id="IPR036284">
    <property type="entry name" value="GGL_sf"/>
</dbReference>
<dbReference type="InterPro" id="IPR001770">
    <property type="entry name" value="Gprotein-gamma"/>
</dbReference>
<dbReference type="PANTHER" id="PTHR13809">
    <property type="entry name" value="GUANINE NUCLEOTIDE-BINDING PROTEIN GAMMA SUBUNIT"/>
    <property type="match status" value="1"/>
</dbReference>
<dbReference type="Pfam" id="PF00631">
    <property type="entry name" value="G-gamma"/>
    <property type="match status" value="1"/>
</dbReference>
<dbReference type="PRINTS" id="PR00321">
    <property type="entry name" value="GPROTEING"/>
</dbReference>
<dbReference type="SMART" id="SM01224">
    <property type="entry name" value="G_gamma"/>
    <property type="match status" value="1"/>
</dbReference>
<dbReference type="SMART" id="SM00224">
    <property type="entry name" value="GGL"/>
    <property type="match status" value="1"/>
</dbReference>
<dbReference type="SUPFAM" id="SSF48670">
    <property type="entry name" value="Transducin (heterotrimeric G protein), gamma chain"/>
    <property type="match status" value="1"/>
</dbReference>
<dbReference type="PROSITE" id="PS50058">
    <property type="entry name" value="G_PROTEIN_GAMMA"/>
    <property type="match status" value="1"/>
</dbReference>
<evidence type="ECO:0000250" key="1"/>
<evidence type="ECO:0000250" key="2">
    <source>
        <dbReference type="UniProtKB" id="P63218"/>
    </source>
</evidence>
<evidence type="ECO:0000305" key="3"/>
<gene>
    <name type="primary">Gng5</name>
    <name type="synonym">Gngt5</name>
</gene>
<feature type="initiator methionine" description="Removed" evidence="2">
    <location>
        <position position="1"/>
    </location>
</feature>
<feature type="chain" id="PRO_0000012629" description="Guanine nucleotide-binding protein G(I)/G(S)/G(O) subunit gamma-5">
    <location>
        <begin position="2"/>
        <end position="65"/>
    </location>
</feature>
<feature type="propeptide" id="PRO_0000012630" description="Removed in mature form" evidence="1">
    <location>
        <begin position="66"/>
        <end position="68"/>
    </location>
</feature>
<feature type="modified residue" description="N-acetylserine" evidence="2">
    <location>
        <position position="2"/>
    </location>
</feature>
<feature type="modified residue" description="Phosphoserine" evidence="2">
    <location>
        <position position="2"/>
    </location>
</feature>
<feature type="modified residue" description="Cysteine methyl ester" evidence="1">
    <location>
        <position position="65"/>
    </location>
</feature>
<feature type="lipid moiety-binding region" description="S-geranylgeranyl cysteine" evidence="1">
    <location>
        <position position="65"/>
    </location>
</feature>
<reference key="1">
    <citation type="journal article" date="2004" name="Genome Res.">
        <title>The status, quality, and expansion of the NIH full-length cDNA project: the Mammalian Gene Collection (MGC).</title>
        <authorList>
            <consortium name="The MGC Project Team"/>
        </authorList>
    </citation>
    <scope>NUCLEOTIDE SEQUENCE [LARGE SCALE MRNA]</scope>
    <source>
        <strain>FVB/N</strain>
        <tissue>Brain</tissue>
        <tissue>Mammary tumor</tissue>
    </source>
</reference>
<reference key="2">
    <citation type="journal article" date="1996" name="Mol. Reprod. Dev.">
        <title>G protein gene expression during mouse oocyte growth and maturation, and preimplantation embryo development.</title>
        <authorList>
            <person name="Williams C.J."/>
            <person name="Schultz R.M."/>
            <person name="Kopf G.S."/>
        </authorList>
    </citation>
    <scope>NUCLEOTIDE SEQUENCE [MRNA] OF 8-53</scope>
    <source>
        <strain>CF-1 / Harlan</strain>
    </source>
</reference>
<reference key="3">
    <citation type="journal article" date="2010" name="Cell">
        <title>A tissue-specific atlas of mouse protein phosphorylation and expression.</title>
        <authorList>
            <person name="Huttlin E.L."/>
            <person name="Jedrychowski M.P."/>
            <person name="Elias J.E."/>
            <person name="Goswami T."/>
            <person name="Rad R."/>
            <person name="Beausoleil S.A."/>
            <person name="Villen J."/>
            <person name="Haas W."/>
            <person name="Sowa M.E."/>
            <person name="Gygi S.P."/>
        </authorList>
    </citation>
    <scope>IDENTIFICATION BY MASS SPECTROMETRY [LARGE SCALE ANALYSIS]</scope>
    <source>
        <tissue>Brown adipose tissue</tissue>
        <tissue>Kidney</tissue>
        <tissue>Lung</tissue>
        <tissue>Spleen</tissue>
    </source>
</reference>